<dbReference type="EMBL" id="AP009493">
    <property type="protein sequence ID" value="BAG19655.1"/>
    <property type="molecule type" value="Genomic_DNA"/>
</dbReference>
<dbReference type="RefSeq" id="WP_003966952.1">
    <property type="nucleotide sequence ID" value="NC_010572.1"/>
</dbReference>
<dbReference type="SMR" id="B1W3Z9"/>
<dbReference type="GeneID" id="97760378"/>
<dbReference type="KEGG" id="sgr:SGR_2826"/>
<dbReference type="eggNOG" id="COG0255">
    <property type="taxonomic scope" value="Bacteria"/>
</dbReference>
<dbReference type="HOGENOM" id="CLU_158491_3_3_11"/>
<dbReference type="Proteomes" id="UP000001685">
    <property type="component" value="Chromosome"/>
</dbReference>
<dbReference type="GO" id="GO:0022625">
    <property type="term" value="C:cytosolic large ribosomal subunit"/>
    <property type="evidence" value="ECO:0007669"/>
    <property type="project" value="TreeGrafter"/>
</dbReference>
<dbReference type="GO" id="GO:0003735">
    <property type="term" value="F:structural constituent of ribosome"/>
    <property type="evidence" value="ECO:0007669"/>
    <property type="project" value="InterPro"/>
</dbReference>
<dbReference type="GO" id="GO:0006412">
    <property type="term" value="P:translation"/>
    <property type="evidence" value="ECO:0007669"/>
    <property type="project" value="UniProtKB-UniRule"/>
</dbReference>
<dbReference type="CDD" id="cd00427">
    <property type="entry name" value="Ribosomal_L29_HIP"/>
    <property type="match status" value="1"/>
</dbReference>
<dbReference type="FunFam" id="1.10.287.310:FF:000001">
    <property type="entry name" value="50S ribosomal protein L29"/>
    <property type="match status" value="1"/>
</dbReference>
<dbReference type="Gene3D" id="1.10.287.310">
    <property type="match status" value="1"/>
</dbReference>
<dbReference type="HAMAP" id="MF_00374">
    <property type="entry name" value="Ribosomal_uL29"/>
    <property type="match status" value="1"/>
</dbReference>
<dbReference type="InterPro" id="IPR050063">
    <property type="entry name" value="Ribosomal_protein_uL29"/>
</dbReference>
<dbReference type="InterPro" id="IPR001854">
    <property type="entry name" value="Ribosomal_uL29"/>
</dbReference>
<dbReference type="InterPro" id="IPR018254">
    <property type="entry name" value="Ribosomal_uL29_CS"/>
</dbReference>
<dbReference type="InterPro" id="IPR036049">
    <property type="entry name" value="Ribosomal_uL29_sf"/>
</dbReference>
<dbReference type="NCBIfam" id="TIGR00012">
    <property type="entry name" value="L29"/>
    <property type="match status" value="1"/>
</dbReference>
<dbReference type="PANTHER" id="PTHR10916">
    <property type="entry name" value="60S RIBOSOMAL PROTEIN L35/50S RIBOSOMAL PROTEIN L29"/>
    <property type="match status" value="1"/>
</dbReference>
<dbReference type="PANTHER" id="PTHR10916:SF0">
    <property type="entry name" value="LARGE RIBOSOMAL SUBUNIT PROTEIN UL29C"/>
    <property type="match status" value="1"/>
</dbReference>
<dbReference type="Pfam" id="PF00831">
    <property type="entry name" value="Ribosomal_L29"/>
    <property type="match status" value="1"/>
</dbReference>
<dbReference type="SUPFAM" id="SSF46561">
    <property type="entry name" value="Ribosomal protein L29 (L29p)"/>
    <property type="match status" value="1"/>
</dbReference>
<dbReference type="PROSITE" id="PS00579">
    <property type="entry name" value="RIBOSOMAL_L29"/>
    <property type="match status" value="1"/>
</dbReference>
<proteinExistence type="inferred from homology"/>
<accession>B1W3Z9</accession>
<gene>
    <name evidence="1" type="primary">rpmC</name>
    <name type="ordered locus">SGR_2826</name>
</gene>
<reference key="1">
    <citation type="journal article" date="2008" name="J. Bacteriol.">
        <title>Genome sequence of the streptomycin-producing microorganism Streptomyces griseus IFO 13350.</title>
        <authorList>
            <person name="Ohnishi Y."/>
            <person name="Ishikawa J."/>
            <person name="Hara H."/>
            <person name="Suzuki H."/>
            <person name="Ikenoya M."/>
            <person name="Ikeda H."/>
            <person name="Yamashita A."/>
            <person name="Hattori M."/>
            <person name="Horinouchi S."/>
        </authorList>
    </citation>
    <scope>NUCLEOTIDE SEQUENCE [LARGE SCALE GENOMIC DNA]</scope>
    <source>
        <strain>JCM 4626 / CBS 651.72 / NBRC 13350 / KCC S-0626 / ISP 5235</strain>
    </source>
</reference>
<evidence type="ECO:0000255" key="1">
    <source>
        <dbReference type="HAMAP-Rule" id="MF_00374"/>
    </source>
</evidence>
<evidence type="ECO:0000305" key="2"/>
<organism>
    <name type="scientific">Streptomyces griseus subsp. griseus (strain JCM 4626 / CBS 651.72 / NBRC 13350 / KCC S-0626 / ISP 5235)</name>
    <dbReference type="NCBI Taxonomy" id="455632"/>
    <lineage>
        <taxon>Bacteria</taxon>
        <taxon>Bacillati</taxon>
        <taxon>Actinomycetota</taxon>
        <taxon>Actinomycetes</taxon>
        <taxon>Kitasatosporales</taxon>
        <taxon>Streptomycetaceae</taxon>
        <taxon>Streptomyces</taxon>
    </lineage>
</organism>
<protein>
    <recommendedName>
        <fullName evidence="1">Large ribosomal subunit protein uL29</fullName>
    </recommendedName>
    <alternativeName>
        <fullName evidence="2">50S ribosomal protein L29</fullName>
    </alternativeName>
</protein>
<sequence>MSAGTKASELRELGDEELLNKLREAKEELFNLRFQAATGQLENHGRLKSVRKDIARIYTLMRERELGIETVESA</sequence>
<name>RL29_STRGG</name>
<comment type="similarity">
    <text evidence="1">Belongs to the universal ribosomal protein uL29 family.</text>
</comment>
<feature type="chain" id="PRO_1000121820" description="Large ribosomal subunit protein uL29">
    <location>
        <begin position="1"/>
        <end position="74"/>
    </location>
</feature>
<keyword id="KW-0687">Ribonucleoprotein</keyword>
<keyword id="KW-0689">Ribosomal protein</keyword>